<accession>B2TIH1</accession>
<reference key="1">
    <citation type="submission" date="2008-04" db="EMBL/GenBank/DDBJ databases">
        <title>Complete sequence of Clostridium botulinum strain Eklund.</title>
        <authorList>
            <person name="Brinkac L.M."/>
            <person name="Brown J.L."/>
            <person name="Bruce D."/>
            <person name="Detter C."/>
            <person name="Munk C."/>
            <person name="Smith L.A."/>
            <person name="Smith T.J."/>
            <person name="Sutton G."/>
            <person name="Brettin T.S."/>
        </authorList>
    </citation>
    <scope>NUCLEOTIDE SEQUENCE [LARGE SCALE GENOMIC DNA]</scope>
    <source>
        <strain>Eklund 17B / Type B</strain>
    </source>
</reference>
<sequence length="156" mass="17726">MPRKGHIAKRDVLPDPVYNSKVVTKFINSIMEDGKKGVAQKICYEAFELIAQRSGKEALEVFEEAMNNVMPLLEVKARRIGGATYQVPMEVRTERRQTLGIRWMLIAARKRGEKLMCERVAGELLDASNNTGAAVKKREDTHKMAEANKAFAHYRY</sequence>
<evidence type="ECO:0000255" key="1">
    <source>
        <dbReference type="HAMAP-Rule" id="MF_00480"/>
    </source>
</evidence>
<evidence type="ECO:0000305" key="2"/>
<feature type="chain" id="PRO_1000125919" description="Small ribosomal subunit protein uS7">
    <location>
        <begin position="1"/>
        <end position="156"/>
    </location>
</feature>
<name>RS7_CLOBB</name>
<keyword id="KW-0687">Ribonucleoprotein</keyword>
<keyword id="KW-0689">Ribosomal protein</keyword>
<keyword id="KW-0694">RNA-binding</keyword>
<keyword id="KW-0699">rRNA-binding</keyword>
<keyword id="KW-0820">tRNA-binding</keyword>
<gene>
    <name evidence="1" type="primary">rpsG</name>
    <name type="ordered locus">CLL_A0234</name>
</gene>
<dbReference type="EMBL" id="CP001056">
    <property type="protein sequence ID" value="ACD24776.1"/>
    <property type="molecule type" value="Genomic_DNA"/>
</dbReference>
<dbReference type="SMR" id="B2TIH1"/>
<dbReference type="KEGG" id="cbk:CLL_A0234"/>
<dbReference type="PATRIC" id="fig|935198.13.peg.208"/>
<dbReference type="HOGENOM" id="CLU_072226_1_1_9"/>
<dbReference type="Proteomes" id="UP000001195">
    <property type="component" value="Chromosome"/>
</dbReference>
<dbReference type="GO" id="GO:0015935">
    <property type="term" value="C:small ribosomal subunit"/>
    <property type="evidence" value="ECO:0007669"/>
    <property type="project" value="InterPro"/>
</dbReference>
<dbReference type="GO" id="GO:0019843">
    <property type="term" value="F:rRNA binding"/>
    <property type="evidence" value="ECO:0007669"/>
    <property type="project" value="UniProtKB-UniRule"/>
</dbReference>
<dbReference type="GO" id="GO:0003735">
    <property type="term" value="F:structural constituent of ribosome"/>
    <property type="evidence" value="ECO:0007669"/>
    <property type="project" value="InterPro"/>
</dbReference>
<dbReference type="GO" id="GO:0000049">
    <property type="term" value="F:tRNA binding"/>
    <property type="evidence" value="ECO:0007669"/>
    <property type="project" value="UniProtKB-UniRule"/>
</dbReference>
<dbReference type="GO" id="GO:0006412">
    <property type="term" value="P:translation"/>
    <property type="evidence" value="ECO:0007669"/>
    <property type="project" value="UniProtKB-UniRule"/>
</dbReference>
<dbReference type="CDD" id="cd14869">
    <property type="entry name" value="uS7_Bacteria"/>
    <property type="match status" value="1"/>
</dbReference>
<dbReference type="FunFam" id="1.10.455.10:FF:000001">
    <property type="entry name" value="30S ribosomal protein S7"/>
    <property type="match status" value="1"/>
</dbReference>
<dbReference type="Gene3D" id="1.10.455.10">
    <property type="entry name" value="Ribosomal protein S7 domain"/>
    <property type="match status" value="1"/>
</dbReference>
<dbReference type="HAMAP" id="MF_00480_B">
    <property type="entry name" value="Ribosomal_uS7_B"/>
    <property type="match status" value="1"/>
</dbReference>
<dbReference type="InterPro" id="IPR000235">
    <property type="entry name" value="Ribosomal_uS7"/>
</dbReference>
<dbReference type="InterPro" id="IPR005717">
    <property type="entry name" value="Ribosomal_uS7_bac/org-type"/>
</dbReference>
<dbReference type="InterPro" id="IPR020606">
    <property type="entry name" value="Ribosomal_uS7_CS"/>
</dbReference>
<dbReference type="InterPro" id="IPR023798">
    <property type="entry name" value="Ribosomal_uS7_dom"/>
</dbReference>
<dbReference type="InterPro" id="IPR036823">
    <property type="entry name" value="Ribosomal_uS7_dom_sf"/>
</dbReference>
<dbReference type="NCBIfam" id="TIGR01029">
    <property type="entry name" value="rpsG_bact"/>
    <property type="match status" value="1"/>
</dbReference>
<dbReference type="PANTHER" id="PTHR11205">
    <property type="entry name" value="RIBOSOMAL PROTEIN S7"/>
    <property type="match status" value="1"/>
</dbReference>
<dbReference type="Pfam" id="PF00177">
    <property type="entry name" value="Ribosomal_S7"/>
    <property type="match status" value="1"/>
</dbReference>
<dbReference type="PIRSF" id="PIRSF002122">
    <property type="entry name" value="RPS7p_RPS7a_RPS5e_RPS7o"/>
    <property type="match status" value="1"/>
</dbReference>
<dbReference type="SUPFAM" id="SSF47973">
    <property type="entry name" value="Ribosomal protein S7"/>
    <property type="match status" value="1"/>
</dbReference>
<dbReference type="PROSITE" id="PS00052">
    <property type="entry name" value="RIBOSOMAL_S7"/>
    <property type="match status" value="1"/>
</dbReference>
<proteinExistence type="inferred from homology"/>
<organism>
    <name type="scientific">Clostridium botulinum (strain Eklund 17B / Type B)</name>
    <dbReference type="NCBI Taxonomy" id="935198"/>
    <lineage>
        <taxon>Bacteria</taxon>
        <taxon>Bacillati</taxon>
        <taxon>Bacillota</taxon>
        <taxon>Clostridia</taxon>
        <taxon>Eubacteriales</taxon>
        <taxon>Clostridiaceae</taxon>
        <taxon>Clostridium</taxon>
    </lineage>
</organism>
<protein>
    <recommendedName>
        <fullName evidence="1">Small ribosomal subunit protein uS7</fullName>
    </recommendedName>
    <alternativeName>
        <fullName evidence="2">30S ribosomal protein S7</fullName>
    </alternativeName>
</protein>
<comment type="function">
    <text evidence="1">One of the primary rRNA binding proteins, it binds directly to 16S rRNA where it nucleates assembly of the head domain of the 30S subunit. Is located at the subunit interface close to the decoding center, probably blocks exit of the E-site tRNA.</text>
</comment>
<comment type="subunit">
    <text evidence="1">Part of the 30S ribosomal subunit. Contacts proteins S9 and S11.</text>
</comment>
<comment type="similarity">
    <text evidence="1">Belongs to the universal ribosomal protein uS7 family.</text>
</comment>